<comment type="function">
    <text evidence="1">Located on the platform of the 30S subunit, it bridges several disparate RNA helices of the 16S rRNA. Forms part of the Shine-Dalgarno cleft in the 70S ribosome.</text>
</comment>
<comment type="subunit">
    <text evidence="1">Part of the 30S ribosomal subunit. Interacts with proteins S7 and S18. Binds to IF-3.</text>
</comment>
<comment type="similarity">
    <text evidence="1">Belongs to the universal ribosomal protein uS11 family.</text>
</comment>
<reference key="1">
    <citation type="journal article" date="2005" name="Proc. Natl. Acad. Sci. U.S.A.">
        <title>The psychrophilic lifestyle as revealed by the genome sequence of Colwellia psychrerythraea 34H through genomic and proteomic analyses.</title>
        <authorList>
            <person name="Methe B.A."/>
            <person name="Nelson K.E."/>
            <person name="Deming J.W."/>
            <person name="Momen B."/>
            <person name="Melamud E."/>
            <person name="Zhang X."/>
            <person name="Moult J."/>
            <person name="Madupu R."/>
            <person name="Nelson W.C."/>
            <person name="Dodson R.J."/>
            <person name="Brinkac L.M."/>
            <person name="Daugherty S.C."/>
            <person name="Durkin A.S."/>
            <person name="DeBoy R.T."/>
            <person name="Kolonay J.F."/>
            <person name="Sullivan S.A."/>
            <person name="Zhou L."/>
            <person name="Davidsen T.M."/>
            <person name="Wu M."/>
            <person name="Huston A.L."/>
            <person name="Lewis M."/>
            <person name="Weaver B."/>
            <person name="Weidman J.F."/>
            <person name="Khouri H."/>
            <person name="Utterback T.R."/>
            <person name="Feldblyum T.V."/>
            <person name="Fraser C.M."/>
        </authorList>
    </citation>
    <scope>NUCLEOTIDE SEQUENCE [LARGE SCALE GENOMIC DNA]</scope>
    <source>
        <strain>34H / ATCC BAA-681</strain>
    </source>
</reference>
<organism>
    <name type="scientific">Colwellia psychrerythraea (strain 34H / ATCC BAA-681)</name>
    <name type="common">Vibrio psychroerythus</name>
    <dbReference type="NCBI Taxonomy" id="167879"/>
    <lineage>
        <taxon>Bacteria</taxon>
        <taxon>Pseudomonadati</taxon>
        <taxon>Pseudomonadota</taxon>
        <taxon>Gammaproteobacteria</taxon>
        <taxon>Alteromonadales</taxon>
        <taxon>Colwelliaceae</taxon>
        <taxon>Colwellia</taxon>
    </lineage>
</organism>
<accession>Q488Z0</accession>
<gene>
    <name evidence="1" type="primary">rpsK</name>
    <name type="ordered locus">CPS_0624</name>
</gene>
<name>RS11_COLP3</name>
<keyword id="KW-0687">Ribonucleoprotein</keyword>
<keyword id="KW-0689">Ribosomal protein</keyword>
<keyword id="KW-0694">RNA-binding</keyword>
<keyword id="KW-0699">rRNA-binding</keyword>
<protein>
    <recommendedName>
        <fullName evidence="1">Small ribosomal subunit protein uS11</fullName>
    </recommendedName>
    <alternativeName>
        <fullName evidence="2">30S ribosomal protein S11</fullName>
    </alternativeName>
</protein>
<sequence length="129" mass="13747">MAKTPVRTRKRVKKQVADGMAHIHASFNNTIVTLTDRQGNALSWATAGGSGFRGSRKSTPFAAQVAADRAGAVAKEFGLKNIEVFVKGPGPGRESAIRALNAAGFKITNITDVTPIPHNGCRPPKKRRV</sequence>
<feature type="chain" id="PRO_0000230397" description="Small ribosomal subunit protein uS11">
    <location>
        <begin position="1"/>
        <end position="129"/>
    </location>
</feature>
<proteinExistence type="inferred from homology"/>
<evidence type="ECO:0000255" key="1">
    <source>
        <dbReference type="HAMAP-Rule" id="MF_01310"/>
    </source>
</evidence>
<evidence type="ECO:0000305" key="2"/>
<dbReference type="EMBL" id="CP000083">
    <property type="protein sequence ID" value="AAZ24770.1"/>
    <property type="molecule type" value="Genomic_DNA"/>
</dbReference>
<dbReference type="RefSeq" id="WP_011041474.1">
    <property type="nucleotide sequence ID" value="NC_003910.7"/>
</dbReference>
<dbReference type="SMR" id="Q488Z0"/>
<dbReference type="STRING" id="167879.CPS_0624"/>
<dbReference type="KEGG" id="cps:CPS_0624"/>
<dbReference type="eggNOG" id="COG0100">
    <property type="taxonomic scope" value="Bacteria"/>
</dbReference>
<dbReference type="HOGENOM" id="CLU_072439_5_0_6"/>
<dbReference type="Proteomes" id="UP000000547">
    <property type="component" value="Chromosome"/>
</dbReference>
<dbReference type="GO" id="GO:1990904">
    <property type="term" value="C:ribonucleoprotein complex"/>
    <property type="evidence" value="ECO:0007669"/>
    <property type="project" value="UniProtKB-KW"/>
</dbReference>
<dbReference type="GO" id="GO:0005840">
    <property type="term" value="C:ribosome"/>
    <property type="evidence" value="ECO:0007669"/>
    <property type="project" value="UniProtKB-KW"/>
</dbReference>
<dbReference type="GO" id="GO:0019843">
    <property type="term" value="F:rRNA binding"/>
    <property type="evidence" value="ECO:0007669"/>
    <property type="project" value="UniProtKB-UniRule"/>
</dbReference>
<dbReference type="GO" id="GO:0003735">
    <property type="term" value="F:structural constituent of ribosome"/>
    <property type="evidence" value="ECO:0007669"/>
    <property type="project" value="InterPro"/>
</dbReference>
<dbReference type="GO" id="GO:0006412">
    <property type="term" value="P:translation"/>
    <property type="evidence" value="ECO:0007669"/>
    <property type="project" value="UniProtKB-UniRule"/>
</dbReference>
<dbReference type="FunFam" id="3.30.420.80:FF:000001">
    <property type="entry name" value="30S ribosomal protein S11"/>
    <property type="match status" value="1"/>
</dbReference>
<dbReference type="Gene3D" id="3.30.420.80">
    <property type="entry name" value="Ribosomal protein S11"/>
    <property type="match status" value="1"/>
</dbReference>
<dbReference type="HAMAP" id="MF_01310">
    <property type="entry name" value="Ribosomal_uS11"/>
    <property type="match status" value="1"/>
</dbReference>
<dbReference type="InterPro" id="IPR001971">
    <property type="entry name" value="Ribosomal_uS11"/>
</dbReference>
<dbReference type="InterPro" id="IPR019981">
    <property type="entry name" value="Ribosomal_uS11_bac-type"/>
</dbReference>
<dbReference type="InterPro" id="IPR018102">
    <property type="entry name" value="Ribosomal_uS11_CS"/>
</dbReference>
<dbReference type="InterPro" id="IPR036967">
    <property type="entry name" value="Ribosomal_uS11_sf"/>
</dbReference>
<dbReference type="NCBIfam" id="NF003698">
    <property type="entry name" value="PRK05309.1"/>
    <property type="match status" value="1"/>
</dbReference>
<dbReference type="NCBIfam" id="TIGR03632">
    <property type="entry name" value="uS11_bact"/>
    <property type="match status" value="1"/>
</dbReference>
<dbReference type="PANTHER" id="PTHR11759">
    <property type="entry name" value="40S RIBOSOMAL PROTEIN S14/30S RIBOSOMAL PROTEIN S11"/>
    <property type="match status" value="1"/>
</dbReference>
<dbReference type="Pfam" id="PF00411">
    <property type="entry name" value="Ribosomal_S11"/>
    <property type="match status" value="1"/>
</dbReference>
<dbReference type="PIRSF" id="PIRSF002131">
    <property type="entry name" value="Ribosomal_S11"/>
    <property type="match status" value="1"/>
</dbReference>
<dbReference type="SUPFAM" id="SSF53137">
    <property type="entry name" value="Translational machinery components"/>
    <property type="match status" value="1"/>
</dbReference>
<dbReference type="PROSITE" id="PS00054">
    <property type="entry name" value="RIBOSOMAL_S11"/>
    <property type="match status" value="1"/>
</dbReference>